<evidence type="ECO:0000255" key="1">
    <source>
        <dbReference type="HAMAP-Rule" id="MF_00222"/>
    </source>
</evidence>
<reference key="1">
    <citation type="journal article" date="1996" name="DNA Res.">
        <title>Sequence analysis of the genome of the unicellular cyanobacterium Synechocystis sp. strain PCC6803. II. Sequence determination of the entire genome and assignment of potential protein-coding regions.</title>
        <authorList>
            <person name="Kaneko T."/>
            <person name="Sato S."/>
            <person name="Kotani H."/>
            <person name="Tanaka A."/>
            <person name="Asamizu E."/>
            <person name="Nakamura Y."/>
            <person name="Miyajima N."/>
            <person name="Hirosawa M."/>
            <person name="Sugiura M."/>
            <person name="Sasamoto S."/>
            <person name="Kimura T."/>
            <person name="Hosouchi T."/>
            <person name="Matsuno A."/>
            <person name="Muraki A."/>
            <person name="Nakazaki N."/>
            <person name="Naruo K."/>
            <person name="Okumura S."/>
            <person name="Shimpo S."/>
            <person name="Takeuchi C."/>
            <person name="Wada T."/>
            <person name="Watanabe A."/>
            <person name="Yamada M."/>
            <person name="Yasuda M."/>
            <person name="Tabata S."/>
        </authorList>
    </citation>
    <scope>NUCLEOTIDE SEQUENCE [LARGE SCALE GENOMIC DNA]</scope>
    <source>
        <strain>ATCC 27184 / PCC 6803 / Kazusa</strain>
    </source>
</reference>
<name>AROE_SYNY3</name>
<dbReference type="EC" id="1.1.1.25" evidence="1"/>
<dbReference type="EMBL" id="BA000022">
    <property type="protein sequence ID" value="BAA18699.1"/>
    <property type="molecule type" value="Genomic_DNA"/>
</dbReference>
<dbReference type="PIR" id="S76787">
    <property type="entry name" value="S76787"/>
</dbReference>
<dbReference type="SMR" id="P74591"/>
<dbReference type="FunCoup" id="P74591">
    <property type="interactions" value="431"/>
</dbReference>
<dbReference type="STRING" id="1148.gene:10500471"/>
<dbReference type="PaxDb" id="1148-1653788"/>
<dbReference type="EnsemblBacteria" id="BAA18699">
    <property type="protein sequence ID" value="BAA18699"/>
    <property type="gene ID" value="BAA18699"/>
</dbReference>
<dbReference type="KEGG" id="syn:slr1559"/>
<dbReference type="eggNOG" id="COG0169">
    <property type="taxonomic scope" value="Bacteria"/>
</dbReference>
<dbReference type="InParanoid" id="P74591"/>
<dbReference type="PhylomeDB" id="P74591"/>
<dbReference type="UniPathway" id="UPA00053">
    <property type="reaction ID" value="UER00087"/>
</dbReference>
<dbReference type="Proteomes" id="UP000001425">
    <property type="component" value="Chromosome"/>
</dbReference>
<dbReference type="GO" id="GO:0005829">
    <property type="term" value="C:cytosol"/>
    <property type="evidence" value="ECO:0000318"/>
    <property type="project" value="GO_Central"/>
</dbReference>
<dbReference type="GO" id="GO:0050661">
    <property type="term" value="F:NADP binding"/>
    <property type="evidence" value="ECO:0000318"/>
    <property type="project" value="GO_Central"/>
</dbReference>
<dbReference type="GO" id="GO:0004764">
    <property type="term" value="F:shikimate 3-dehydrogenase (NADP+) activity"/>
    <property type="evidence" value="ECO:0000318"/>
    <property type="project" value="GO_Central"/>
</dbReference>
<dbReference type="GO" id="GO:0008652">
    <property type="term" value="P:amino acid biosynthetic process"/>
    <property type="evidence" value="ECO:0007669"/>
    <property type="project" value="UniProtKB-KW"/>
</dbReference>
<dbReference type="GO" id="GO:0009073">
    <property type="term" value="P:aromatic amino acid family biosynthetic process"/>
    <property type="evidence" value="ECO:0007669"/>
    <property type="project" value="UniProtKB-KW"/>
</dbReference>
<dbReference type="GO" id="GO:0009423">
    <property type="term" value="P:chorismate biosynthetic process"/>
    <property type="evidence" value="ECO:0000318"/>
    <property type="project" value="GO_Central"/>
</dbReference>
<dbReference type="GO" id="GO:0019632">
    <property type="term" value="P:shikimate metabolic process"/>
    <property type="evidence" value="ECO:0000318"/>
    <property type="project" value="GO_Central"/>
</dbReference>
<dbReference type="CDD" id="cd01065">
    <property type="entry name" value="NAD_bind_Shikimate_DH"/>
    <property type="match status" value="1"/>
</dbReference>
<dbReference type="FunFam" id="3.40.50.720:FF:001272">
    <property type="entry name" value="Shikimate dehydrogenase (NADP(+))"/>
    <property type="match status" value="1"/>
</dbReference>
<dbReference type="Gene3D" id="3.40.50.10860">
    <property type="entry name" value="Leucine Dehydrogenase, chain A, domain 1"/>
    <property type="match status" value="1"/>
</dbReference>
<dbReference type="Gene3D" id="3.40.50.720">
    <property type="entry name" value="NAD(P)-binding Rossmann-like Domain"/>
    <property type="match status" value="1"/>
</dbReference>
<dbReference type="HAMAP" id="MF_00222">
    <property type="entry name" value="Shikimate_DH_AroE"/>
    <property type="match status" value="1"/>
</dbReference>
<dbReference type="InterPro" id="IPR046346">
    <property type="entry name" value="Aminoacid_DH-like_N_sf"/>
</dbReference>
<dbReference type="InterPro" id="IPR036291">
    <property type="entry name" value="NAD(P)-bd_dom_sf"/>
</dbReference>
<dbReference type="InterPro" id="IPR041121">
    <property type="entry name" value="SDH_C"/>
</dbReference>
<dbReference type="InterPro" id="IPR011342">
    <property type="entry name" value="Shikimate_DH"/>
</dbReference>
<dbReference type="InterPro" id="IPR013708">
    <property type="entry name" value="Shikimate_DH-bd_N"/>
</dbReference>
<dbReference type="InterPro" id="IPR022893">
    <property type="entry name" value="Shikimate_DH_fam"/>
</dbReference>
<dbReference type="InterPro" id="IPR006151">
    <property type="entry name" value="Shikm_DH/Glu-tRNA_Rdtase"/>
</dbReference>
<dbReference type="NCBIfam" id="TIGR00507">
    <property type="entry name" value="aroE"/>
    <property type="match status" value="1"/>
</dbReference>
<dbReference type="NCBIfam" id="NF001314">
    <property type="entry name" value="PRK00258.2-2"/>
    <property type="match status" value="1"/>
</dbReference>
<dbReference type="PANTHER" id="PTHR21089:SF1">
    <property type="entry name" value="BIFUNCTIONAL 3-DEHYDROQUINATE DEHYDRATASE_SHIKIMATE DEHYDROGENASE, CHLOROPLASTIC"/>
    <property type="match status" value="1"/>
</dbReference>
<dbReference type="PANTHER" id="PTHR21089">
    <property type="entry name" value="SHIKIMATE DEHYDROGENASE"/>
    <property type="match status" value="1"/>
</dbReference>
<dbReference type="Pfam" id="PF18317">
    <property type="entry name" value="SDH_C"/>
    <property type="match status" value="1"/>
</dbReference>
<dbReference type="Pfam" id="PF01488">
    <property type="entry name" value="Shikimate_DH"/>
    <property type="match status" value="1"/>
</dbReference>
<dbReference type="Pfam" id="PF08501">
    <property type="entry name" value="Shikimate_dh_N"/>
    <property type="match status" value="1"/>
</dbReference>
<dbReference type="SUPFAM" id="SSF53223">
    <property type="entry name" value="Aminoacid dehydrogenase-like, N-terminal domain"/>
    <property type="match status" value="1"/>
</dbReference>
<dbReference type="SUPFAM" id="SSF51735">
    <property type="entry name" value="NAD(P)-binding Rossmann-fold domains"/>
    <property type="match status" value="1"/>
</dbReference>
<gene>
    <name evidence="1" type="primary">aroE</name>
    <name type="ordered locus">slr1559</name>
</gene>
<protein>
    <recommendedName>
        <fullName evidence="1">Shikimate dehydrogenase (NADP(+))</fullName>
        <shortName evidence="1">SDH</shortName>
        <ecNumber evidence="1">1.1.1.25</ecNumber>
    </recommendedName>
</protein>
<feature type="chain" id="PRO_0000136045" description="Shikimate dehydrogenase (NADP(+))">
    <location>
        <begin position="1"/>
        <end position="290"/>
    </location>
</feature>
<feature type="active site" description="Proton acceptor" evidence="1">
    <location>
        <position position="72"/>
    </location>
</feature>
<feature type="binding site" evidence="1">
    <location>
        <begin position="21"/>
        <end position="23"/>
    </location>
    <ligand>
        <name>shikimate</name>
        <dbReference type="ChEBI" id="CHEBI:36208"/>
    </ligand>
</feature>
<feature type="binding site" evidence="1">
    <location>
        <position position="68"/>
    </location>
    <ligand>
        <name>shikimate</name>
        <dbReference type="ChEBI" id="CHEBI:36208"/>
    </ligand>
</feature>
<feature type="binding site" evidence="1">
    <location>
        <position position="84"/>
    </location>
    <ligand>
        <name>NADP(+)</name>
        <dbReference type="ChEBI" id="CHEBI:58349"/>
    </ligand>
</feature>
<feature type="binding site" evidence="1">
    <location>
        <position position="93"/>
    </location>
    <ligand>
        <name>shikimate</name>
        <dbReference type="ChEBI" id="CHEBI:36208"/>
    </ligand>
</feature>
<feature type="binding site" evidence="1">
    <location>
        <position position="108"/>
    </location>
    <ligand>
        <name>shikimate</name>
        <dbReference type="ChEBI" id="CHEBI:36208"/>
    </ligand>
</feature>
<feature type="binding site" evidence="1">
    <location>
        <begin position="132"/>
        <end position="136"/>
    </location>
    <ligand>
        <name>NADP(+)</name>
        <dbReference type="ChEBI" id="CHEBI:58349"/>
    </ligand>
</feature>
<feature type="binding site" evidence="1">
    <location>
        <position position="230"/>
    </location>
    <ligand>
        <name>NADP(+)</name>
        <dbReference type="ChEBI" id="CHEBI:58349"/>
    </ligand>
</feature>
<feature type="binding site" evidence="1">
    <location>
        <position position="232"/>
    </location>
    <ligand>
        <name>shikimate</name>
        <dbReference type="ChEBI" id="CHEBI:36208"/>
    </ligand>
</feature>
<feature type="binding site" evidence="1">
    <location>
        <position position="253"/>
    </location>
    <ligand>
        <name>NADP(+)</name>
        <dbReference type="ChEBI" id="CHEBI:58349"/>
    </ligand>
</feature>
<organism>
    <name type="scientific">Synechocystis sp. (strain ATCC 27184 / PCC 6803 / Kazusa)</name>
    <dbReference type="NCBI Taxonomy" id="1111708"/>
    <lineage>
        <taxon>Bacteria</taxon>
        <taxon>Bacillati</taxon>
        <taxon>Cyanobacteriota</taxon>
        <taxon>Cyanophyceae</taxon>
        <taxon>Synechococcales</taxon>
        <taxon>Merismopediaceae</taxon>
        <taxon>Synechocystis</taxon>
    </lineage>
</organism>
<proteinExistence type="inferred from homology"/>
<keyword id="KW-0028">Amino-acid biosynthesis</keyword>
<keyword id="KW-0057">Aromatic amino acid biosynthesis</keyword>
<keyword id="KW-0521">NADP</keyword>
<keyword id="KW-0560">Oxidoreductase</keyword>
<keyword id="KW-1185">Reference proteome</keyword>
<sequence>MPSITGKTKLLGVIGYPVGHSLSPVMHNAALQAMASDYAYVAFPIAPEDLTIAIAGLGASGVQGLSVTIPHKQVVMPLLTQITETARQVGAVNTLWRDGHGWQGTNTDVEGFLAPLLELKQDWSGRTAVILGYGGAARAVVVGLTQLGCPEIIVVGRSQEKLAQFANSWTDPKIKQALQVLPWEALSTVIPKASLLINSTPVGMAPHPKQSPLDQSLVEKLPPTAIAYDLIYTPRPTRFLQHAQERGLVTIDGAEMLVQQGAAALKIWLQQEVPVDVMRQALLHHLEKSA</sequence>
<accession>P74591</accession>
<comment type="function">
    <text evidence="1">Involved in the biosynthesis of the chorismate, which leads to the biosynthesis of aromatic amino acids. Catalyzes the reversible NADPH linked reduction of 3-dehydroshikimate (DHSA) to yield shikimate (SA).</text>
</comment>
<comment type="catalytic activity">
    <reaction evidence="1">
        <text>shikimate + NADP(+) = 3-dehydroshikimate + NADPH + H(+)</text>
        <dbReference type="Rhea" id="RHEA:17737"/>
        <dbReference type="ChEBI" id="CHEBI:15378"/>
        <dbReference type="ChEBI" id="CHEBI:16630"/>
        <dbReference type="ChEBI" id="CHEBI:36208"/>
        <dbReference type="ChEBI" id="CHEBI:57783"/>
        <dbReference type="ChEBI" id="CHEBI:58349"/>
        <dbReference type="EC" id="1.1.1.25"/>
    </reaction>
</comment>
<comment type="pathway">
    <text evidence="1">Metabolic intermediate biosynthesis; chorismate biosynthesis; chorismate from D-erythrose 4-phosphate and phosphoenolpyruvate: step 4/7.</text>
</comment>
<comment type="subunit">
    <text evidence="1">Homodimer.</text>
</comment>
<comment type="similarity">
    <text evidence="1">Belongs to the shikimate dehydrogenase family.</text>
</comment>